<reference key="1">
    <citation type="journal article" date="2009" name="J. Bacteriol.">
        <title>Genome sequence of the probiotic bacterium Bifidobacterium animalis subsp. lactis AD011.</title>
        <authorList>
            <person name="Kim J.F."/>
            <person name="Jeong H."/>
            <person name="Yu D.S."/>
            <person name="Choi S.-H."/>
            <person name="Hur C.-G."/>
            <person name="Park M.-S."/>
            <person name="Yoon S.H."/>
            <person name="Kim D.-W."/>
            <person name="Ji G.E."/>
            <person name="Park H.-S."/>
            <person name="Oh T.K."/>
        </authorList>
    </citation>
    <scope>NUCLEOTIDE SEQUENCE [LARGE SCALE GENOMIC DNA]</scope>
    <source>
        <strain>AD011</strain>
    </source>
</reference>
<comment type="function">
    <text evidence="1">Catalyzes the last two sequential reactions in the de novo biosynthetic pathway for UDP-N-acetylglucosamine (UDP-GlcNAc). The C-terminal domain catalyzes the transfer of acetyl group from acetyl coenzyme A to glucosamine-1-phosphate (GlcN-1-P) to produce N-acetylglucosamine-1-phosphate (GlcNAc-1-P), which is converted into UDP-GlcNAc by the transfer of uridine 5-monophosphate (from uridine 5-triphosphate), a reaction catalyzed by the N-terminal domain.</text>
</comment>
<comment type="catalytic activity">
    <reaction evidence="1">
        <text>alpha-D-glucosamine 1-phosphate + acetyl-CoA = N-acetyl-alpha-D-glucosamine 1-phosphate + CoA + H(+)</text>
        <dbReference type="Rhea" id="RHEA:13725"/>
        <dbReference type="ChEBI" id="CHEBI:15378"/>
        <dbReference type="ChEBI" id="CHEBI:57287"/>
        <dbReference type="ChEBI" id="CHEBI:57288"/>
        <dbReference type="ChEBI" id="CHEBI:57776"/>
        <dbReference type="ChEBI" id="CHEBI:58516"/>
        <dbReference type="EC" id="2.3.1.157"/>
    </reaction>
</comment>
<comment type="catalytic activity">
    <reaction evidence="1">
        <text>N-acetyl-alpha-D-glucosamine 1-phosphate + UTP + H(+) = UDP-N-acetyl-alpha-D-glucosamine + diphosphate</text>
        <dbReference type="Rhea" id="RHEA:13509"/>
        <dbReference type="ChEBI" id="CHEBI:15378"/>
        <dbReference type="ChEBI" id="CHEBI:33019"/>
        <dbReference type="ChEBI" id="CHEBI:46398"/>
        <dbReference type="ChEBI" id="CHEBI:57705"/>
        <dbReference type="ChEBI" id="CHEBI:57776"/>
        <dbReference type="EC" id="2.7.7.23"/>
    </reaction>
</comment>
<comment type="cofactor">
    <cofactor evidence="1">
        <name>Mg(2+)</name>
        <dbReference type="ChEBI" id="CHEBI:18420"/>
    </cofactor>
    <text evidence="1">Binds 1 Mg(2+) ion per subunit.</text>
</comment>
<comment type="pathway">
    <text evidence="1">Nucleotide-sugar biosynthesis; UDP-N-acetyl-alpha-D-glucosamine biosynthesis; N-acetyl-alpha-D-glucosamine 1-phosphate from alpha-D-glucosamine 6-phosphate (route II): step 2/2.</text>
</comment>
<comment type="pathway">
    <text evidence="1">Nucleotide-sugar biosynthesis; UDP-N-acetyl-alpha-D-glucosamine biosynthesis; UDP-N-acetyl-alpha-D-glucosamine from N-acetyl-alpha-D-glucosamine 1-phosphate: step 1/1.</text>
</comment>
<comment type="pathway">
    <text evidence="1">Bacterial outer membrane biogenesis; LPS lipid A biosynthesis.</text>
</comment>
<comment type="subunit">
    <text evidence="1">Homotrimer.</text>
</comment>
<comment type="subcellular location">
    <subcellularLocation>
        <location evidence="1">Cytoplasm</location>
    </subcellularLocation>
</comment>
<comment type="similarity">
    <text evidence="1">In the N-terminal section; belongs to the N-acetylglucosamine-1-phosphate uridyltransferase family.</text>
</comment>
<comment type="similarity">
    <text evidence="1">In the C-terminal section; belongs to the transferase hexapeptide repeat family.</text>
</comment>
<sequence>MTLTAAIVLAAGEGTRMRSRKPKVLHEFAGKTFLNRVMDAVGALDPETLAVVVRYQAQRVAEAARSYDDAVLIVEQDEIPGTGRAVQCAMEQLGEQGPLSGTVLITASDMPLLDTSTLKQLLDYHRDSGDGATVLTTVLDDPTGYGRIIRDADGNVLKIVEQKDGNSSELAVREVNTSVYVFDAAVLEQAIANLNADNAQGEFYLTDALTVARQVSKVGAFAAPDPLSVEGVNDRVQLASLAKAHNLRVCRQWMLDGVTIVDPQTTWIEDEVEMESDAVILPGCFLQGHTTIAHDAVVGPYTTLIDATVEPEAHVERSRVQESRIGREANIGPWTYLRPGNEIGTGSKAGAFVEMKKAHIGDGSKVPHLSYVGDADLGENTNIGGGTITANYDGVHKNHTHIGSDVHIGAGNLFVAPVNVGDGVTSGAGSVIRHDVPGDAMVYSENTQHVVDNWKPAWER</sequence>
<keyword id="KW-0012">Acyltransferase</keyword>
<keyword id="KW-0133">Cell shape</keyword>
<keyword id="KW-0961">Cell wall biogenesis/degradation</keyword>
<keyword id="KW-0963">Cytoplasm</keyword>
<keyword id="KW-0460">Magnesium</keyword>
<keyword id="KW-0479">Metal-binding</keyword>
<keyword id="KW-0511">Multifunctional enzyme</keyword>
<keyword id="KW-0548">Nucleotidyltransferase</keyword>
<keyword id="KW-0573">Peptidoglycan synthesis</keyword>
<keyword id="KW-1185">Reference proteome</keyword>
<keyword id="KW-0677">Repeat</keyword>
<keyword id="KW-0808">Transferase</keyword>
<name>GLMU_BIFA0</name>
<feature type="chain" id="PRO_1000186405" description="Bifunctional protein GlmU">
    <location>
        <begin position="1"/>
        <end position="460"/>
    </location>
</feature>
<feature type="region of interest" description="Pyrophosphorylase" evidence="1">
    <location>
        <begin position="1"/>
        <end position="235"/>
    </location>
</feature>
<feature type="region of interest" description="Linker" evidence="1">
    <location>
        <begin position="236"/>
        <end position="256"/>
    </location>
</feature>
<feature type="region of interest" description="N-acetyltransferase" evidence="1">
    <location>
        <begin position="257"/>
        <end position="460"/>
    </location>
</feature>
<feature type="active site" description="Proton acceptor" evidence="1">
    <location>
        <position position="368"/>
    </location>
</feature>
<feature type="binding site" evidence="1">
    <location>
        <begin position="9"/>
        <end position="12"/>
    </location>
    <ligand>
        <name>UDP-N-acetyl-alpha-D-glucosamine</name>
        <dbReference type="ChEBI" id="CHEBI:57705"/>
    </ligand>
</feature>
<feature type="binding site" evidence="1">
    <location>
        <position position="23"/>
    </location>
    <ligand>
        <name>UDP-N-acetyl-alpha-D-glucosamine</name>
        <dbReference type="ChEBI" id="CHEBI:57705"/>
    </ligand>
</feature>
<feature type="binding site" evidence="1">
    <location>
        <position position="76"/>
    </location>
    <ligand>
        <name>UDP-N-acetyl-alpha-D-glucosamine</name>
        <dbReference type="ChEBI" id="CHEBI:57705"/>
    </ligand>
</feature>
<feature type="binding site" evidence="1">
    <location>
        <begin position="81"/>
        <end position="82"/>
    </location>
    <ligand>
        <name>UDP-N-acetyl-alpha-D-glucosamine</name>
        <dbReference type="ChEBI" id="CHEBI:57705"/>
    </ligand>
</feature>
<feature type="binding site" evidence="1">
    <location>
        <position position="109"/>
    </location>
    <ligand>
        <name>Mg(2+)</name>
        <dbReference type="ChEBI" id="CHEBI:18420"/>
    </ligand>
</feature>
<feature type="binding site" evidence="1">
    <location>
        <position position="146"/>
    </location>
    <ligand>
        <name>UDP-N-acetyl-alpha-D-glucosamine</name>
        <dbReference type="ChEBI" id="CHEBI:57705"/>
    </ligand>
</feature>
<feature type="binding site" evidence="1">
    <location>
        <position position="161"/>
    </location>
    <ligand>
        <name>UDP-N-acetyl-alpha-D-glucosamine</name>
        <dbReference type="ChEBI" id="CHEBI:57705"/>
    </ligand>
</feature>
<feature type="binding site" evidence="1">
    <location>
        <position position="176"/>
    </location>
    <ligand>
        <name>UDP-N-acetyl-alpha-D-glucosamine</name>
        <dbReference type="ChEBI" id="CHEBI:57705"/>
    </ligand>
</feature>
<feature type="binding site" evidence="1">
    <location>
        <position position="233"/>
    </location>
    <ligand>
        <name>Mg(2+)</name>
        <dbReference type="ChEBI" id="CHEBI:18420"/>
    </ligand>
</feature>
<feature type="binding site" evidence="1">
    <location>
        <position position="233"/>
    </location>
    <ligand>
        <name>UDP-N-acetyl-alpha-D-glucosamine</name>
        <dbReference type="ChEBI" id="CHEBI:57705"/>
    </ligand>
</feature>
<feature type="binding site" evidence="1">
    <location>
        <position position="338"/>
    </location>
    <ligand>
        <name>UDP-N-acetyl-alpha-D-glucosamine</name>
        <dbReference type="ChEBI" id="CHEBI:57705"/>
    </ligand>
</feature>
<feature type="binding site" evidence="1">
    <location>
        <position position="356"/>
    </location>
    <ligand>
        <name>UDP-N-acetyl-alpha-D-glucosamine</name>
        <dbReference type="ChEBI" id="CHEBI:57705"/>
    </ligand>
</feature>
<feature type="binding site" evidence="1">
    <location>
        <position position="371"/>
    </location>
    <ligand>
        <name>UDP-N-acetyl-alpha-D-glucosamine</name>
        <dbReference type="ChEBI" id="CHEBI:57705"/>
    </ligand>
</feature>
<feature type="binding site" evidence="1">
    <location>
        <position position="382"/>
    </location>
    <ligand>
        <name>UDP-N-acetyl-alpha-D-glucosamine</name>
        <dbReference type="ChEBI" id="CHEBI:57705"/>
    </ligand>
</feature>
<feature type="binding site" evidence="1">
    <location>
        <begin position="391"/>
        <end position="392"/>
    </location>
    <ligand>
        <name>acetyl-CoA</name>
        <dbReference type="ChEBI" id="CHEBI:57288"/>
    </ligand>
</feature>
<feature type="binding site" evidence="1">
    <location>
        <position position="428"/>
    </location>
    <ligand>
        <name>acetyl-CoA</name>
        <dbReference type="ChEBI" id="CHEBI:57288"/>
    </ligand>
</feature>
<accession>B8DU78</accession>
<organism>
    <name type="scientific">Bifidobacterium animalis subsp. lactis (strain AD011)</name>
    <dbReference type="NCBI Taxonomy" id="442563"/>
    <lineage>
        <taxon>Bacteria</taxon>
        <taxon>Bacillati</taxon>
        <taxon>Actinomycetota</taxon>
        <taxon>Actinomycetes</taxon>
        <taxon>Bifidobacteriales</taxon>
        <taxon>Bifidobacteriaceae</taxon>
        <taxon>Bifidobacterium</taxon>
    </lineage>
</organism>
<protein>
    <recommendedName>
        <fullName evidence="1">Bifunctional protein GlmU</fullName>
    </recommendedName>
    <domain>
        <recommendedName>
            <fullName evidence="1">UDP-N-acetylglucosamine pyrophosphorylase</fullName>
            <ecNumber evidence="1">2.7.7.23</ecNumber>
        </recommendedName>
        <alternativeName>
            <fullName evidence="1">N-acetylglucosamine-1-phosphate uridyltransferase</fullName>
        </alternativeName>
    </domain>
    <domain>
        <recommendedName>
            <fullName evidence="1">Glucosamine-1-phosphate N-acetyltransferase</fullName>
            <ecNumber evidence="1">2.3.1.157</ecNumber>
        </recommendedName>
    </domain>
</protein>
<dbReference type="EC" id="2.7.7.23" evidence="1"/>
<dbReference type="EC" id="2.3.1.157" evidence="1"/>
<dbReference type="EMBL" id="CP001213">
    <property type="protein sequence ID" value="ACL29557.1"/>
    <property type="molecule type" value="Genomic_DNA"/>
</dbReference>
<dbReference type="RefSeq" id="WP_004218050.1">
    <property type="nucleotide sequence ID" value="NC_011835.1"/>
</dbReference>
<dbReference type="SMR" id="B8DU78"/>
<dbReference type="STRING" id="442563.BLA_1269"/>
<dbReference type="GeneID" id="29696236"/>
<dbReference type="KEGG" id="bla:BLA_1269"/>
<dbReference type="HOGENOM" id="CLU_029499_15_2_11"/>
<dbReference type="UniPathway" id="UPA00113">
    <property type="reaction ID" value="UER00532"/>
</dbReference>
<dbReference type="UniPathway" id="UPA00113">
    <property type="reaction ID" value="UER00533"/>
</dbReference>
<dbReference type="UniPathway" id="UPA00973"/>
<dbReference type="Proteomes" id="UP000002456">
    <property type="component" value="Chromosome"/>
</dbReference>
<dbReference type="GO" id="GO:0005737">
    <property type="term" value="C:cytoplasm"/>
    <property type="evidence" value="ECO:0007669"/>
    <property type="project" value="UniProtKB-SubCell"/>
</dbReference>
<dbReference type="GO" id="GO:0016020">
    <property type="term" value="C:membrane"/>
    <property type="evidence" value="ECO:0007669"/>
    <property type="project" value="GOC"/>
</dbReference>
<dbReference type="GO" id="GO:0019134">
    <property type="term" value="F:glucosamine-1-phosphate N-acetyltransferase activity"/>
    <property type="evidence" value="ECO:0007669"/>
    <property type="project" value="UniProtKB-UniRule"/>
</dbReference>
<dbReference type="GO" id="GO:0000287">
    <property type="term" value="F:magnesium ion binding"/>
    <property type="evidence" value="ECO:0007669"/>
    <property type="project" value="UniProtKB-UniRule"/>
</dbReference>
<dbReference type="GO" id="GO:0003977">
    <property type="term" value="F:UDP-N-acetylglucosamine diphosphorylase activity"/>
    <property type="evidence" value="ECO:0007669"/>
    <property type="project" value="UniProtKB-UniRule"/>
</dbReference>
<dbReference type="GO" id="GO:0000902">
    <property type="term" value="P:cell morphogenesis"/>
    <property type="evidence" value="ECO:0007669"/>
    <property type="project" value="UniProtKB-UniRule"/>
</dbReference>
<dbReference type="GO" id="GO:0071555">
    <property type="term" value="P:cell wall organization"/>
    <property type="evidence" value="ECO:0007669"/>
    <property type="project" value="UniProtKB-KW"/>
</dbReference>
<dbReference type="GO" id="GO:0009245">
    <property type="term" value="P:lipid A biosynthetic process"/>
    <property type="evidence" value="ECO:0007669"/>
    <property type="project" value="UniProtKB-UniRule"/>
</dbReference>
<dbReference type="GO" id="GO:0009252">
    <property type="term" value="P:peptidoglycan biosynthetic process"/>
    <property type="evidence" value="ECO:0007669"/>
    <property type="project" value="UniProtKB-UniRule"/>
</dbReference>
<dbReference type="GO" id="GO:0008360">
    <property type="term" value="P:regulation of cell shape"/>
    <property type="evidence" value="ECO:0007669"/>
    <property type="project" value="UniProtKB-KW"/>
</dbReference>
<dbReference type="GO" id="GO:0006048">
    <property type="term" value="P:UDP-N-acetylglucosamine biosynthetic process"/>
    <property type="evidence" value="ECO:0007669"/>
    <property type="project" value="UniProtKB-UniPathway"/>
</dbReference>
<dbReference type="CDD" id="cd02540">
    <property type="entry name" value="GT2_GlmU_N_bac"/>
    <property type="match status" value="1"/>
</dbReference>
<dbReference type="CDD" id="cd03353">
    <property type="entry name" value="LbH_GlmU_C"/>
    <property type="match status" value="1"/>
</dbReference>
<dbReference type="Gene3D" id="2.160.10.10">
    <property type="entry name" value="Hexapeptide repeat proteins"/>
    <property type="match status" value="1"/>
</dbReference>
<dbReference type="Gene3D" id="3.90.550.10">
    <property type="entry name" value="Spore Coat Polysaccharide Biosynthesis Protein SpsA, Chain A"/>
    <property type="match status" value="1"/>
</dbReference>
<dbReference type="HAMAP" id="MF_01631">
    <property type="entry name" value="GlmU"/>
    <property type="match status" value="1"/>
</dbReference>
<dbReference type="InterPro" id="IPR005882">
    <property type="entry name" value="Bifunctional_GlmU"/>
</dbReference>
<dbReference type="InterPro" id="IPR050065">
    <property type="entry name" value="GlmU-like"/>
</dbReference>
<dbReference type="InterPro" id="IPR038009">
    <property type="entry name" value="GlmU_C_LbH"/>
</dbReference>
<dbReference type="InterPro" id="IPR025877">
    <property type="entry name" value="MobA-like_NTP_Trfase"/>
</dbReference>
<dbReference type="InterPro" id="IPR029044">
    <property type="entry name" value="Nucleotide-diphossugar_trans"/>
</dbReference>
<dbReference type="InterPro" id="IPR011004">
    <property type="entry name" value="Trimer_LpxA-like_sf"/>
</dbReference>
<dbReference type="NCBIfam" id="TIGR01173">
    <property type="entry name" value="glmU"/>
    <property type="match status" value="1"/>
</dbReference>
<dbReference type="NCBIfam" id="NF010932">
    <property type="entry name" value="PRK14352.1"/>
    <property type="match status" value="1"/>
</dbReference>
<dbReference type="PANTHER" id="PTHR43584:SF3">
    <property type="entry name" value="BIFUNCTIONAL PROTEIN GLMU"/>
    <property type="match status" value="1"/>
</dbReference>
<dbReference type="PANTHER" id="PTHR43584">
    <property type="entry name" value="NUCLEOTIDYL TRANSFERASE"/>
    <property type="match status" value="1"/>
</dbReference>
<dbReference type="Pfam" id="PF12804">
    <property type="entry name" value="NTP_transf_3"/>
    <property type="match status" value="1"/>
</dbReference>
<dbReference type="SUPFAM" id="SSF53448">
    <property type="entry name" value="Nucleotide-diphospho-sugar transferases"/>
    <property type="match status" value="1"/>
</dbReference>
<dbReference type="SUPFAM" id="SSF51161">
    <property type="entry name" value="Trimeric LpxA-like enzymes"/>
    <property type="match status" value="1"/>
</dbReference>
<gene>
    <name evidence="1" type="primary">glmU</name>
    <name type="ordered locus">BLA_1269</name>
</gene>
<proteinExistence type="inferred from homology"/>
<evidence type="ECO:0000255" key="1">
    <source>
        <dbReference type="HAMAP-Rule" id="MF_01631"/>
    </source>
</evidence>